<reference key="1">
    <citation type="journal article" date="1999" name="Nat. Med.">
        <title>Molecular basis for resistance to silver cations in Salmonella.</title>
        <authorList>
            <person name="Gupta A."/>
            <person name="Matsui K."/>
            <person name="Lo J.-F."/>
            <person name="Silver S."/>
        </authorList>
    </citation>
    <scope>NUCLEOTIDE SEQUENCE [GENOMIC DNA]</scope>
    <scope>PROTEIN SEQUENCE OF 21-35</scope>
    <scope>CHARACTERIZATION</scope>
</reference>
<dbReference type="EMBL" id="AF067954">
    <property type="protein sequence ID" value="AAD11743.1"/>
    <property type="molecule type" value="Genomic_DNA"/>
</dbReference>
<dbReference type="RefSeq" id="WP_000790485.1">
    <property type="nucleotide sequence ID" value="NZ_WIDF01000005.1"/>
</dbReference>
<dbReference type="GeneID" id="93248108"/>
<dbReference type="PATRIC" id="fig|90371.1190.peg.2996"/>
<dbReference type="GO" id="GO:0042597">
    <property type="term" value="C:periplasmic space"/>
    <property type="evidence" value="ECO:0007669"/>
    <property type="project" value="UniProtKB-SubCell"/>
</dbReference>
<dbReference type="GO" id="GO:0046872">
    <property type="term" value="F:metal ion binding"/>
    <property type="evidence" value="ECO:0000269"/>
    <property type="project" value="DisProt"/>
</dbReference>
<dbReference type="NCBIfam" id="NF047789">
    <property type="entry name" value="AgBindSilE"/>
    <property type="match status" value="1"/>
</dbReference>
<gene>
    <name type="primary">silE</name>
</gene>
<sequence length="143" mass="15201">MKNIVLASLLGFGLISSAWATETVNIHERVNNAQAPAHQMQSAAAPVGIQGTAPRMAGMDQHEQAIIAHETMTNGSADAHQKMVESHQRMMGSQTVSPTGPSKSLAAMNEHERAAVAHEFMNNGQSGPHQAMAEAHRRMLSAG</sequence>
<accession>Q9Z4N3</accession>
<feature type="signal peptide" evidence="1">
    <location>
        <begin position="1"/>
        <end position="20"/>
    </location>
</feature>
<feature type="chain" id="PRO_0000022347" description="Silver-binding protein SilE">
    <location>
        <begin position="21"/>
        <end position="143"/>
    </location>
</feature>
<name>SILE_SALTM</name>
<protein>
    <recommendedName>
        <fullName>Silver-binding protein SilE</fullName>
    </recommendedName>
</protein>
<keyword id="KW-0903">Direct protein sequencing</keyword>
<keyword id="KW-0479">Metal-binding</keyword>
<keyword id="KW-0574">Periplasm</keyword>
<keyword id="KW-0614">Plasmid</keyword>
<keyword id="KW-0732">Signal</keyword>
<proteinExistence type="evidence at protein level"/>
<evidence type="ECO:0000269" key="1">
    <source>
    </source>
</evidence>
<evidence type="ECO:0000305" key="2"/>
<organism>
    <name type="scientific">Salmonella typhimurium</name>
    <dbReference type="NCBI Taxonomy" id="90371"/>
    <lineage>
        <taxon>Bacteria</taxon>
        <taxon>Pseudomonadati</taxon>
        <taxon>Pseudomonadota</taxon>
        <taxon>Gammaproteobacteria</taxon>
        <taxon>Enterobacterales</taxon>
        <taxon>Enterobacteriaceae</taxon>
        <taxon>Salmonella</taxon>
    </lineage>
</organism>
<geneLocation type="plasmid">
    <name>pMG101</name>
</geneLocation>
<comment type="function">
    <text>Component of the sil cation-efflux system that confers resistance to silver.</text>
</comment>
<comment type="subcellular location">
    <subcellularLocation>
        <location>Periplasm</location>
    </subcellularLocation>
</comment>
<comment type="induction">
    <text>By silver.</text>
</comment>
<comment type="similarity">
    <text evidence="2">To E.coli PcoE.</text>
</comment>